<dbReference type="EC" id="3.1.3.16" evidence="1"/>
<dbReference type="EMBL" id="BX284603">
    <property type="protein sequence ID" value="CCD65292.2"/>
    <property type="molecule type" value="Genomic_DNA"/>
</dbReference>
<dbReference type="EMBL" id="BX284603">
    <property type="protein sequence ID" value="CCD65293.2"/>
    <property type="molecule type" value="Genomic_DNA"/>
</dbReference>
<dbReference type="RefSeq" id="NP_001367543.1">
    <molecule id="P48459-2"/>
    <property type="nucleotide sequence ID" value="NM_001379750.1"/>
</dbReference>
<dbReference type="RefSeq" id="NP_001367544.1">
    <molecule id="P48459-1"/>
    <property type="nucleotide sequence ID" value="NM_001379749.1"/>
</dbReference>
<dbReference type="RefSeq" id="NP_498351.1">
    <property type="nucleotide sequence ID" value="NM_065950.3"/>
</dbReference>
<dbReference type="RefSeq" id="NP_498352.1">
    <property type="nucleotide sequence ID" value="NM_065951.3"/>
</dbReference>
<dbReference type="SMR" id="P48459"/>
<dbReference type="FunCoup" id="P48459">
    <property type="interactions" value="43"/>
</dbReference>
<dbReference type="STRING" id="6239.C23G10.1b.1"/>
<dbReference type="PaxDb" id="6239-C23G10.1b"/>
<dbReference type="EnsemblMetazoa" id="C23G10.1a.1">
    <molecule id="P48459-2"/>
    <property type="protein sequence ID" value="C23G10.1a.1"/>
    <property type="gene ID" value="WBGene00016010"/>
</dbReference>
<dbReference type="EnsemblMetazoa" id="C23G10.1b.1">
    <molecule id="P48459-1"/>
    <property type="protein sequence ID" value="C23G10.1b.1"/>
    <property type="gene ID" value="WBGene00016010"/>
</dbReference>
<dbReference type="GeneID" id="175880"/>
<dbReference type="UCSC" id="C23G10.1b">
    <molecule id="P48459-1"/>
    <property type="organism name" value="c. elegans"/>
</dbReference>
<dbReference type="AGR" id="WB:WBGene00016010"/>
<dbReference type="WormBase" id="C23G10.1a">
    <molecule id="P48459-2"/>
    <property type="protein sequence ID" value="CE54137"/>
    <property type="gene ID" value="WBGene00016010"/>
</dbReference>
<dbReference type="WormBase" id="C23G10.1b">
    <molecule id="P48459-1"/>
    <property type="protein sequence ID" value="CE54185"/>
    <property type="gene ID" value="WBGene00016010"/>
</dbReference>
<dbReference type="eggNOG" id="KOG0374">
    <property type="taxonomic scope" value="Eukaryota"/>
</dbReference>
<dbReference type="GeneTree" id="ENSGT00970000196197"/>
<dbReference type="HOGENOM" id="CLU_600258_0_0_1"/>
<dbReference type="InParanoid" id="P48459"/>
<dbReference type="OrthoDB" id="5819440at2759"/>
<dbReference type="PRO" id="PR:P48459"/>
<dbReference type="Proteomes" id="UP000001940">
    <property type="component" value="Chromosome III"/>
</dbReference>
<dbReference type="Bgee" id="WBGene00016010">
    <property type="expression patterns" value="Expressed in adult organism and 1 other cell type or tissue"/>
</dbReference>
<dbReference type="ExpressionAtlas" id="P48459">
    <property type="expression patterns" value="baseline and differential"/>
</dbReference>
<dbReference type="GO" id="GO:0005737">
    <property type="term" value="C:cytoplasm"/>
    <property type="evidence" value="ECO:0000318"/>
    <property type="project" value="GO_Central"/>
</dbReference>
<dbReference type="GO" id="GO:0005634">
    <property type="term" value="C:nucleus"/>
    <property type="evidence" value="ECO:0000318"/>
    <property type="project" value="GO_Central"/>
</dbReference>
<dbReference type="GO" id="GO:0046872">
    <property type="term" value="F:metal ion binding"/>
    <property type="evidence" value="ECO:0007669"/>
    <property type="project" value="UniProtKB-KW"/>
</dbReference>
<dbReference type="GO" id="GO:0004722">
    <property type="term" value="F:protein serine/threonine phosphatase activity"/>
    <property type="evidence" value="ECO:0000318"/>
    <property type="project" value="GO_Central"/>
</dbReference>
<dbReference type="GO" id="GO:0050829">
    <property type="term" value="P:defense response to Gram-negative bacterium"/>
    <property type="evidence" value="ECO:0000315"/>
    <property type="project" value="UniProtKB"/>
</dbReference>
<dbReference type="FunFam" id="3.60.21.10:FF:000068">
    <property type="entry name" value="Serine/threonine-protein phosphatase"/>
    <property type="match status" value="1"/>
</dbReference>
<dbReference type="Gene3D" id="3.60.21.10">
    <property type="match status" value="1"/>
</dbReference>
<dbReference type="InterPro" id="IPR004843">
    <property type="entry name" value="Calcineurin-like_PHP_ApaH"/>
</dbReference>
<dbReference type="InterPro" id="IPR029052">
    <property type="entry name" value="Metallo-depent_PP-like"/>
</dbReference>
<dbReference type="InterPro" id="IPR050341">
    <property type="entry name" value="PP1_catalytic_subunit"/>
</dbReference>
<dbReference type="InterPro" id="IPR006186">
    <property type="entry name" value="Ser/Thr-sp_prot-phosphatase"/>
</dbReference>
<dbReference type="PANTHER" id="PTHR11668">
    <property type="entry name" value="SERINE/THREONINE PROTEIN PHOSPHATASE"/>
    <property type="match status" value="1"/>
</dbReference>
<dbReference type="PANTHER" id="PTHR11668:SF211">
    <property type="entry name" value="SERINE_THREONINE-PROTEIN PHOSPHATASE C23G10.1"/>
    <property type="match status" value="1"/>
</dbReference>
<dbReference type="Pfam" id="PF00149">
    <property type="entry name" value="Metallophos"/>
    <property type="match status" value="1"/>
</dbReference>
<dbReference type="PRINTS" id="PR00114">
    <property type="entry name" value="STPHPHTASE"/>
</dbReference>
<dbReference type="SMART" id="SM00156">
    <property type="entry name" value="PP2Ac"/>
    <property type="match status" value="1"/>
</dbReference>
<dbReference type="SUPFAM" id="SSF56300">
    <property type="entry name" value="Metallo-dependent phosphatases"/>
    <property type="match status" value="1"/>
</dbReference>
<dbReference type="PROSITE" id="PS00125">
    <property type="entry name" value="SER_THR_PHOSPHATASE"/>
    <property type="match status" value="1"/>
</dbReference>
<comment type="catalytic activity">
    <reaction evidence="1">
        <text>O-phospho-L-seryl-[protein] + H2O = L-seryl-[protein] + phosphate</text>
        <dbReference type="Rhea" id="RHEA:20629"/>
        <dbReference type="Rhea" id="RHEA-COMP:9863"/>
        <dbReference type="Rhea" id="RHEA-COMP:11604"/>
        <dbReference type="ChEBI" id="CHEBI:15377"/>
        <dbReference type="ChEBI" id="CHEBI:29999"/>
        <dbReference type="ChEBI" id="CHEBI:43474"/>
        <dbReference type="ChEBI" id="CHEBI:83421"/>
        <dbReference type="EC" id="3.1.3.16"/>
    </reaction>
</comment>
<comment type="catalytic activity">
    <reaction evidence="1">
        <text>O-phospho-L-threonyl-[protein] + H2O = L-threonyl-[protein] + phosphate</text>
        <dbReference type="Rhea" id="RHEA:47004"/>
        <dbReference type="Rhea" id="RHEA-COMP:11060"/>
        <dbReference type="Rhea" id="RHEA-COMP:11605"/>
        <dbReference type="ChEBI" id="CHEBI:15377"/>
        <dbReference type="ChEBI" id="CHEBI:30013"/>
        <dbReference type="ChEBI" id="CHEBI:43474"/>
        <dbReference type="ChEBI" id="CHEBI:61977"/>
        <dbReference type="EC" id="3.1.3.16"/>
    </reaction>
</comment>
<comment type="cofactor">
    <cofactor evidence="1">
        <name>Mn(2+)</name>
        <dbReference type="ChEBI" id="CHEBI:29035"/>
    </cofactor>
    <text evidence="1">Binds 2 manganese ions per subunit.</text>
</comment>
<comment type="alternative products">
    <event type="alternative splicing"/>
    <isoform>
        <id>P48459-1</id>
        <name evidence="4">b</name>
        <sequence type="displayed"/>
    </isoform>
    <isoform>
        <id>P48459-2</id>
        <name evidence="3">a</name>
        <sequence type="described" ref="VSP_060920 VSP_060921"/>
    </isoform>
</comment>
<comment type="similarity">
    <text evidence="2">Belongs to the PPP phosphatase family. PP-1 subfamily.</text>
</comment>
<sequence>MSKKTRVPEVADDCTKTVYPDPIPMPTCPQLINDGTSCFLNIILQMLKRANFHDHFKGDWQKGKQKMLMHKELQQIFNGKPGPKDVSRLREMFSNEALKDGPHPLLVALKCLIKMSAVSDNDVIKEKGARDKMFQKQSDESNKMFAEHFIKTLLACKGMTKIRTMDIFRLIHICKKIFTVQKSMVEIDGPVRICGDLHGQYPDLIRLFAQGGFPPDSNYLFLGDYVDRGSFNLEVILLCLAYKARYPNNFMMLRGNHEVIHINEKYGFKDEVFNRKGEYHDELYPEFNEMMDMMPLVALVGGRILCMHGGLSQHIKSLDDLRNLRRPFHSEDECLENDIMWSDPAKVSGWTANPRGASVQFGENEVKEMCKLLDIDLIVRGHQVVQDGYEFFAGKKLVTVFSAPHYMQSFTNSAAVCKVSAGLEVSFEVLKPEDIRVEEIKCSAESSCASDMQQ</sequence>
<keyword id="KW-0025">Alternative splicing</keyword>
<keyword id="KW-0378">Hydrolase</keyword>
<keyword id="KW-0464">Manganese</keyword>
<keyword id="KW-0479">Metal-binding</keyword>
<keyword id="KW-0904">Protein phosphatase</keyword>
<keyword id="KW-1185">Reference proteome</keyword>
<name>YSD1_CAEEL</name>
<feature type="chain" id="PRO_0000058914" description="Serine/threonine-protein phosphatase C23G10.1">
    <location>
        <begin position="1"/>
        <end position="454"/>
    </location>
</feature>
<feature type="active site" description="Proton donor" evidence="1">
    <location>
        <position position="257"/>
    </location>
</feature>
<feature type="binding site" evidence="1">
    <location>
        <position position="196"/>
    </location>
    <ligand>
        <name>Mn(2+)</name>
        <dbReference type="ChEBI" id="CHEBI:29035"/>
        <label>1</label>
    </ligand>
</feature>
<feature type="binding site" evidence="1">
    <location>
        <position position="198"/>
    </location>
    <ligand>
        <name>Mn(2+)</name>
        <dbReference type="ChEBI" id="CHEBI:29035"/>
        <label>1</label>
    </ligand>
</feature>
<feature type="binding site" evidence="1">
    <location>
        <position position="224"/>
    </location>
    <ligand>
        <name>Mn(2+)</name>
        <dbReference type="ChEBI" id="CHEBI:29035"/>
        <label>1</label>
    </ligand>
</feature>
<feature type="binding site" evidence="1">
    <location>
        <position position="224"/>
    </location>
    <ligand>
        <name>Mn(2+)</name>
        <dbReference type="ChEBI" id="CHEBI:29035"/>
        <label>2</label>
    </ligand>
</feature>
<feature type="binding site" evidence="1">
    <location>
        <position position="256"/>
    </location>
    <ligand>
        <name>Mn(2+)</name>
        <dbReference type="ChEBI" id="CHEBI:29035"/>
        <label>2</label>
    </ligand>
</feature>
<feature type="binding site" evidence="1">
    <location>
        <position position="308"/>
    </location>
    <ligand>
        <name>Mn(2+)</name>
        <dbReference type="ChEBI" id="CHEBI:29035"/>
        <label>2</label>
    </ligand>
</feature>
<feature type="binding site" evidence="1">
    <location>
        <position position="382"/>
    </location>
    <ligand>
        <name>Mn(2+)</name>
        <dbReference type="ChEBI" id="CHEBI:29035"/>
        <label>2</label>
    </ligand>
</feature>
<feature type="splice variant" id="VSP_060920" description="In isoform a." evidence="2">
    <original>T</original>
    <variation>P</variation>
    <location>
        <position position="5"/>
    </location>
</feature>
<feature type="splice variant" id="VSP_060921" description="In isoform a." evidence="2">
    <original>DDCTKTVYPDPIPMPTCPQLINDGTSCFLNIILQMLKRANFHDHFKGDWQKGKQKMLMHKELQQIFNGKPGPKDVSRLREMFSNEALKDGPHPLLVALKCLIK</original>
    <variation>E</variation>
    <location>
        <begin position="12"/>
        <end position="114"/>
    </location>
</feature>
<proteinExistence type="inferred from homology"/>
<protein>
    <recommendedName>
        <fullName evidence="2">Serine/threonine-protein phosphatase C23G10.1</fullName>
        <ecNumber evidence="1">3.1.3.16</ecNumber>
    </recommendedName>
</protein>
<gene>
    <name evidence="4" type="ORF">C23G10.1</name>
</gene>
<reference key="1">
    <citation type="journal article" date="1998" name="Science">
        <title>Genome sequence of the nematode C. elegans: a platform for investigating biology.</title>
        <authorList>
            <consortium name="The C. elegans sequencing consortium"/>
        </authorList>
    </citation>
    <scope>NUCLEOTIDE SEQUENCE [LARGE SCALE GENOMIC DNA]</scope>
    <source>
        <strain>Bristol N2</strain>
    </source>
</reference>
<accession>P48459</accession>
<accession>G8JY37</accession>
<organism>
    <name type="scientific">Caenorhabditis elegans</name>
    <dbReference type="NCBI Taxonomy" id="6239"/>
    <lineage>
        <taxon>Eukaryota</taxon>
        <taxon>Metazoa</taxon>
        <taxon>Ecdysozoa</taxon>
        <taxon>Nematoda</taxon>
        <taxon>Chromadorea</taxon>
        <taxon>Rhabditida</taxon>
        <taxon>Rhabditina</taxon>
        <taxon>Rhabditomorpha</taxon>
        <taxon>Rhabditoidea</taxon>
        <taxon>Rhabditidae</taxon>
        <taxon>Peloderinae</taxon>
        <taxon>Caenorhabditis</taxon>
    </lineage>
</organism>
<evidence type="ECO:0000250" key="1">
    <source>
        <dbReference type="UniProtKB" id="P36873"/>
    </source>
</evidence>
<evidence type="ECO:0000305" key="2"/>
<evidence type="ECO:0000312" key="3">
    <source>
        <dbReference type="WormBase" id="C23G10.1a"/>
    </source>
</evidence>
<evidence type="ECO:0000312" key="4">
    <source>
        <dbReference type="WormBase" id="C23G10.1b"/>
    </source>
</evidence>